<dbReference type="EMBL" id="CU928145">
    <property type="protein sequence ID" value="CAU99883.1"/>
    <property type="molecule type" value="Genomic_DNA"/>
</dbReference>
<dbReference type="RefSeq" id="WP_000108459.1">
    <property type="nucleotide sequence ID" value="NC_011748.1"/>
</dbReference>
<dbReference type="SMR" id="B7LHS8"/>
<dbReference type="GeneID" id="75206074"/>
<dbReference type="KEGG" id="eck:EC55989_3637"/>
<dbReference type="HOGENOM" id="CLU_001265_46_8_6"/>
<dbReference type="Proteomes" id="UP000000746">
    <property type="component" value="Chromosome"/>
</dbReference>
<dbReference type="GO" id="GO:0005886">
    <property type="term" value="C:plasma membrane"/>
    <property type="evidence" value="ECO:0007669"/>
    <property type="project" value="UniProtKB-SubCell"/>
</dbReference>
<dbReference type="GO" id="GO:0046943">
    <property type="term" value="F:carboxylic acid transmembrane transporter activity"/>
    <property type="evidence" value="ECO:0007669"/>
    <property type="project" value="TreeGrafter"/>
</dbReference>
<dbReference type="GO" id="GO:0015538">
    <property type="term" value="F:sialic acid:proton symporter activity"/>
    <property type="evidence" value="ECO:0007669"/>
    <property type="project" value="UniProtKB-UniRule"/>
</dbReference>
<dbReference type="CDD" id="cd17316">
    <property type="entry name" value="MFS_SV2_like"/>
    <property type="match status" value="1"/>
</dbReference>
<dbReference type="FunFam" id="1.20.1250.20:FF:000027">
    <property type="entry name" value="Sialic acid transporter NanT"/>
    <property type="match status" value="1"/>
</dbReference>
<dbReference type="FunFam" id="1.20.1250.20:FF:000038">
    <property type="entry name" value="Sialic acid transporter NanT"/>
    <property type="match status" value="1"/>
</dbReference>
<dbReference type="Gene3D" id="1.20.1250.20">
    <property type="entry name" value="MFS general substrate transporter like domains"/>
    <property type="match status" value="2"/>
</dbReference>
<dbReference type="HAMAP" id="MF_01238">
    <property type="entry name" value="MFS_NanT"/>
    <property type="match status" value="1"/>
</dbReference>
<dbReference type="InterPro" id="IPR011701">
    <property type="entry name" value="MFS"/>
</dbReference>
<dbReference type="InterPro" id="IPR020846">
    <property type="entry name" value="MFS_dom"/>
</dbReference>
<dbReference type="InterPro" id="IPR036259">
    <property type="entry name" value="MFS_trans_sf"/>
</dbReference>
<dbReference type="InterPro" id="IPR004742">
    <property type="entry name" value="SA_transporter"/>
</dbReference>
<dbReference type="NCBIfam" id="TIGR00891">
    <property type="entry name" value="2A0112"/>
    <property type="match status" value="1"/>
</dbReference>
<dbReference type="NCBIfam" id="NF003024">
    <property type="entry name" value="PRK03893.1"/>
    <property type="match status" value="1"/>
</dbReference>
<dbReference type="PANTHER" id="PTHR23508">
    <property type="entry name" value="CARBOXYLIC ACID TRANSPORTER PROTEIN HOMOLOG"/>
    <property type="match status" value="1"/>
</dbReference>
<dbReference type="PANTHER" id="PTHR23508:SF3">
    <property type="entry name" value="SIALIC ACID TRANSPORTER NANT"/>
    <property type="match status" value="1"/>
</dbReference>
<dbReference type="Pfam" id="PF07690">
    <property type="entry name" value="MFS_1"/>
    <property type="match status" value="1"/>
</dbReference>
<dbReference type="SUPFAM" id="SSF103473">
    <property type="entry name" value="MFS general substrate transporter"/>
    <property type="match status" value="1"/>
</dbReference>
<dbReference type="PROSITE" id="PS50850">
    <property type="entry name" value="MFS"/>
    <property type="match status" value="1"/>
</dbReference>
<evidence type="ECO:0000255" key="1">
    <source>
        <dbReference type="HAMAP-Rule" id="MF_01238"/>
    </source>
</evidence>
<feature type="chain" id="PRO_1000214042" description="Sialic acid transporter NanT">
    <location>
        <begin position="1"/>
        <end position="496"/>
    </location>
</feature>
<feature type="transmembrane region" description="Helical" evidence="1">
    <location>
        <begin position="22"/>
        <end position="42"/>
    </location>
</feature>
<feature type="transmembrane region" description="Helical" evidence="1">
    <location>
        <begin position="58"/>
        <end position="78"/>
    </location>
</feature>
<feature type="transmembrane region" description="Helical" evidence="1">
    <location>
        <begin position="92"/>
        <end position="112"/>
    </location>
</feature>
<feature type="transmembrane region" description="Helical" evidence="1">
    <location>
        <begin position="116"/>
        <end position="136"/>
    </location>
</feature>
<feature type="transmembrane region" description="Helical" evidence="1">
    <location>
        <begin position="148"/>
        <end position="168"/>
    </location>
</feature>
<feature type="transmembrane region" description="Helical" evidence="1">
    <location>
        <begin position="170"/>
        <end position="190"/>
    </location>
</feature>
<feature type="transmembrane region" description="Helical" evidence="1">
    <location>
        <begin position="224"/>
        <end position="244"/>
    </location>
</feature>
<feature type="transmembrane region" description="Helical" evidence="1">
    <location>
        <begin position="247"/>
        <end position="267"/>
    </location>
</feature>
<feature type="transmembrane region" description="Helical" evidence="1">
    <location>
        <begin position="278"/>
        <end position="298"/>
    </location>
</feature>
<feature type="transmembrane region" description="Helical" evidence="1">
    <location>
        <begin position="313"/>
        <end position="333"/>
    </location>
</feature>
<feature type="transmembrane region" description="Helical" evidence="1">
    <location>
        <begin position="353"/>
        <end position="375"/>
    </location>
</feature>
<feature type="transmembrane region" description="Helical" evidence="1">
    <location>
        <begin position="406"/>
        <end position="426"/>
    </location>
</feature>
<feature type="transmembrane region" description="Helical" evidence="1">
    <location>
        <begin position="431"/>
        <end position="451"/>
    </location>
</feature>
<protein>
    <recommendedName>
        <fullName evidence="1">Sialic acid transporter NanT</fullName>
    </recommendedName>
    <alternativeName>
        <fullName evidence="1">Sialic acid permease</fullName>
    </alternativeName>
    <alternativeName>
        <fullName evidence="1">Sialic acid/H(+) symporter</fullName>
    </alternativeName>
</protein>
<gene>
    <name evidence="1" type="primary">nanT</name>
    <name type="ordered locus">EC55989_3637</name>
</gene>
<organism>
    <name type="scientific">Escherichia coli (strain 55989 / EAEC)</name>
    <dbReference type="NCBI Taxonomy" id="585055"/>
    <lineage>
        <taxon>Bacteria</taxon>
        <taxon>Pseudomonadati</taxon>
        <taxon>Pseudomonadota</taxon>
        <taxon>Gammaproteobacteria</taxon>
        <taxon>Enterobacterales</taxon>
        <taxon>Enterobacteriaceae</taxon>
        <taxon>Escherichia</taxon>
    </lineage>
</organism>
<keyword id="KW-0997">Cell inner membrane</keyword>
<keyword id="KW-1003">Cell membrane</keyword>
<keyword id="KW-0472">Membrane</keyword>
<keyword id="KW-1185">Reference proteome</keyword>
<keyword id="KW-0762">Sugar transport</keyword>
<keyword id="KW-0812">Transmembrane</keyword>
<keyword id="KW-1133">Transmembrane helix</keyword>
<keyword id="KW-0813">Transport</keyword>
<comment type="function">
    <text evidence="1">Catalyzes the proton-dependent transport of sialic acid.</text>
</comment>
<comment type="catalytic activity">
    <reaction evidence="1">
        <text>N-acetylneuraminate(in) + H(+)(in) = N-acetylneuraminate(out) + H(+)(out)</text>
        <dbReference type="Rhea" id="RHEA:28987"/>
        <dbReference type="ChEBI" id="CHEBI:15378"/>
        <dbReference type="ChEBI" id="CHEBI:35418"/>
    </reaction>
</comment>
<comment type="subcellular location">
    <subcellularLocation>
        <location evidence="1">Cell inner membrane</location>
        <topology evidence="1">Multi-pass membrane protein</topology>
    </subcellularLocation>
</comment>
<comment type="similarity">
    <text evidence="1">Belongs to the major facilitator superfamily. Sialate:H(+) symporter (SHS) (TC 2.A.1.12) family.</text>
</comment>
<reference key="1">
    <citation type="journal article" date="2009" name="PLoS Genet.">
        <title>Organised genome dynamics in the Escherichia coli species results in highly diverse adaptive paths.</title>
        <authorList>
            <person name="Touchon M."/>
            <person name="Hoede C."/>
            <person name="Tenaillon O."/>
            <person name="Barbe V."/>
            <person name="Baeriswyl S."/>
            <person name="Bidet P."/>
            <person name="Bingen E."/>
            <person name="Bonacorsi S."/>
            <person name="Bouchier C."/>
            <person name="Bouvet O."/>
            <person name="Calteau A."/>
            <person name="Chiapello H."/>
            <person name="Clermont O."/>
            <person name="Cruveiller S."/>
            <person name="Danchin A."/>
            <person name="Diard M."/>
            <person name="Dossat C."/>
            <person name="Karoui M.E."/>
            <person name="Frapy E."/>
            <person name="Garry L."/>
            <person name="Ghigo J.M."/>
            <person name="Gilles A.M."/>
            <person name="Johnson J."/>
            <person name="Le Bouguenec C."/>
            <person name="Lescat M."/>
            <person name="Mangenot S."/>
            <person name="Martinez-Jehanne V."/>
            <person name="Matic I."/>
            <person name="Nassif X."/>
            <person name="Oztas S."/>
            <person name="Petit M.A."/>
            <person name="Pichon C."/>
            <person name="Rouy Z."/>
            <person name="Ruf C.S."/>
            <person name="Schneider D."/>
            <person name="Tourret J."/>
            <person name="Vacherie B."/>
            <person name="Vallenet D."/>
            <person name="Medigue C."/>
            <person name="Rocha E.P.C."/>
            <person name="Denamur E."/>
        </authorList>
    </citation>
    <scope>NUCLEOTIDE SEQUENCE [LARGE SCALE GENOMIC DNA]</scope>
    <source>
        <strain>55989 / EAEC</strain>
    </source>
</reference>
<accession>B7LHS8</accession>
<proteinExistence type="inferred from homology"/>
<name>NANT_ECO55</name>
<sequence length="496" mass="53581">MSTTTQNIPWYRHLNRAQWRAFSAAWLGYLLDGFDFVLIALVLTEVQGEFGLTTVQAASLISAAFISRWFGGLMLGAMGDRYGRRLAMVTSIVLFSAGTLACGFAPGYITMFIARLVIGMGMAGEYGSSATYVIESWPKHLRNKASGFLISGFSVGAVVAAQVYSLVVPVWGWRALFFIGILPIIFALWLRKNIPEAEDWKEKHAGKAPVRTMVDILYRGEHRIANIVMTLAAATALWFCFAGNLQNAAIVAVLGLLCAAIFISFMVQSTGKRWPTGVMLMVVVLFAFLYSWPIQALLPTYLKTDLAYNPHTVANVLFFSGFGAAVGCCVGGFLGDWLGTRKAYVCSLLASQLLIIPVFAIGGANVWVLGLLLFFQQMLGQGIAGILPKLIGGYFDTDQRAAGLGFTYNVGALGGALAPIIGALIAQRLDLGTALASLSFSLTFVVILLIGLDMPSRVQRWLRPEALRTHDAIDGKPFSGAVPFGSAKNDLVKTKS</sequence>